<accession>B1IIE6</accession>
<comment type="catalytic activity">
    <reaction evidence="1">
        <text>tRNA(Arg) + L-arginine + ATP = L-arginyl-tRNA(Arg) + AMP + diphosphate</text>
        <dbReference type="Rhea" id="RHEA:20301"/>
        <dbReference type="Rhea" id="RHEA-COMP:9658"/>
        <dbReference type="Rhea" id="RHEA-COMP:9673"/>
        <dbReference type="ChEBI" id="CHEBI:30616"/>
        <dbReference type="ChEBI" id="CHEBI:32682"/>
        <dbReference type="ChEBI" id="CHEBI:33019"/>
        <dbReference type="ChEBI" id="CHEBI:78442"/>
        <dbReference type="ChEBI" id="CHEBI:78513"/>
        <dbReference type="ChEBI" id="CHEBI:456215"/>
        <dbReference type="EC" id="6.1.1.19"/>
    </reaction>
</comment>
<comment type="subunit">
    <text evidence="1">Monomer.</text>
</comment>
<comment type="subcellular location">
    <subcellularLocation>
        <location evidence="1">Cytoplasm</location>
    </subcellularLocation>
</comment>
<comment type="similarity">
    <text evidence="1">Belongs to the class-I aminoacyl-tRNA synthetase family.</text>
</comment>
<name>SYR_CLOBK</name>
<keyword id="KW-0030">Aminoacyl-tRNA synthetase</keyword>
<keyword id="KW-0067">ATP-binding</keyword>
<keyword id="KW-0963">Cytoplasm</keyword>
<keyword id="KW-0436">Ligase</keyword>
<keyword id="KW-0547">Nucleotide-binding</keyword>
<keyword id="KW-0648">Protein biosynthesis</keyword>
<organism>
    <name type="scientific">Clostridium botulinum (strain Okra / Type B1)</name>
    <dbReference type="NCBI Taxonomy" id="498213"/>
    <lineage>
        <taxon>Bacteria</taxon>
        <taxon>Bacillati</taxon>
        <taxon>Bacillota</taxon>
        <taxon>Clostridia</taxon>
        <taxon>Eubacteriales</taxon>
        <taxon>Clostridiaceae</taxon>
        <taxon>Clostridium</taxon>
    </lineage>
</organism>
<dbReference type="EC" id="6.1.1.19" evidence="1"/>
<dbReference type="EMBL" id="CP000939">
    <property type="protein sequence ID" value="ACA45065.1"/>
    <property type="molecule type" value="Genomic_DNA"/>
</dbReference>
<dbReference type="RefSeq" id="WP_015957778.1">
    <property type="nucleotide sequence ID" value="NC_010516.1"/>
</dbReference>
<dbReference type="SMR" id="B1IIE6"/>
<dbReference type="KEGG" id="cbb:CLD_3487"/>
<dbReference type="HOGENOM" id="CLU_006406_6_1_9"/>
<dbReference type="Proteomes" id="UP000008541">
    <property type="component" value="Chromosome"/>
</dbReference>
<dbReference type="GO" id="GO:0005737">
    <property type="term" value="C:cytoplasm"/>
    <property type="evidence" value="ECO:0007669"/>
    <property type="project" value="UniProtKB-SubCell"/>
</dbReference>
<dbReference type="GO" id="GO:0004814">
    <property type="term" value="F:arginine-tRNA ligase activity"/>
    <property type="evidence" value="ECO:0007669"/>
    <property type="project" value="UniProtKB-UniRule"/>
</dbReference>
<dbReference type="GO" id="GO:0005524">
    <property type="term" value="F:ATP binding"/>
    <property type="evidence" value="ECO:0007669"/>
    <property type="project" value="UniProtKB-UniRule"/>
</dbReference>
<dbReference type="GO" id="GO:0006420">
    <property type="term" value="P:arginyl-tRNA aminoacylation"/>
    <property type="evidence" value="ECO:0007669"/>
    <property type="project" value="UniProtKB-UniRule"/>
</dbReference>
<dbReference type="CDD" id="cd07956">
    <property type="entry name" value="Anticodon_Ia_Arg"/>
    <property type="match status" value="1"/>
</dbReference>
<dbReference type="CDD" id="cd00671">
    <property type="entry name" value="ArgRS_core"/>
    <property type="match status" value="1"/>
</dbReference>
<dbReference type="FunFam" id="1.10.730.10:FF:000008">
    <property type="entry name" value="Arginine--tRNA ligase"/>
    <property type="match status" value="1"/>
</dbReference>
<dbReference type="FunFam" id="3.30.1360.70:FF:000005">
    <property type="entry name" value="Arginine--tRNA ligase"/>
    <property type="match status" value="1"/>
</dbReference>
<dbReference type="FunFam" id="3.40.50.620:FF:000116">
    <property type="entry name" value="Arginine--tRNA ligase"/>
    <property type="match status" value="1"/>
</dbReference>
<dbReference type="Gene3D" id="3.30.1360.70">
    <property type="entry name" value="Arginyl tRNA synthetase N-terminal domain"/>
    <property type="match status" value="1"/>
</dbReference>
<dbReference type="Gene3D" id="3.40.50.620">
    <property type="entry name" value="HUPs"/>
    <property type="match status" value="1"/>
</dbReference>
<dbReference type="Gene3D" id="1.10.730.10">
    <property type="entry name" value="Isoleucyl-tRNA Synthetase, Domain 1"/>
    <property type="match status" value="1"/>
</dbReference>
<dbReference type="HAMAP" id="MF_00123">
    <property type="entry name" value="Arg_tRNA_synth"/>
    <property type="match status" value="1"/>
</dbReference>
<dbReference type="InterPro" id="IPR001412">
    <property type="entry name" value="aa-tRNA-synth_I_CS"/>
</dbReference>
<dbReference type="InterPro" id="IPR001278">
    <property type="entry name" value="Arg-tRNA-ligase"/>
</dbReference>
<dbReference type="InterPro" id="IPR005148">
    <property type="entry name" value="Arg-tRNA-synth_N"/>
</dbReference>
<dbReference type="InterPro" id="IPR036695">
    <property type="entry name" value="Arg-tRNA-synth_N_sf"/>
</dbReference>
<dbReference type="InterPro" id="IPR035684">
    <property type="entry name" value="ArgRS_core"/>
</dbReference>
<dbReference type="InterPro" id="IPR008909">
    <property type="entry name" value="DALR_anticod-bd"/>
</dbReference>
<dbReference type="InterPro" id="IPR014729">
    <property type="entry name" value="Rossmann-like_a/b/a_fold"/>
</dbReference>
<dbReference type="InterPro" id="IPR009080">
    <property type="entry name" value="tRNAsynth_Ia_anticodon-bd"/>
</dbReference>
<dbReference type="NCBIfam" id="TIGR00456">
    <property type="entry name" value="argS"/>
    <property type="match status" value="1"/>
</dbReference>
<dbReference type="PANTHER" id="PTHR11956:SF5">
    <property type="entry name" value="ARGININE--TRNA LIGASE, CYTOPLASMIC"/>
    <property type="match status" value="1"/>
</dbReference>
<dbReference type="PANTHER" id="PTHR11956">
    <property type="entry name" value="ARGINYL-TRNA SYNTHETASE"/>
    <property type="match status" value="1"/>
</dbReference>
<dbReference type="Pfam" id="PF03485">
    <property type="entry name" value="Arg_tRNA_synt_N"/>
    <property type="match status" value="1"/>
</dbReference>
<dbReference type="Pfam" id="PF05746">
    <property type="entry name" value="DALR_1"/>
    <property type="match status" value="1"/>
</dbReference>
<dbReference type="Pfam" id="PF00750">
    <property type="entry name" value="tRNA-synt_1d"/>
    <property type="match status" value="1"/>
</dbReference>
<dbReference type="PRINTS" id="PR01038">
    <property type="entry name" value="TRNASYNTHARG"/>
</dbReference>
<dbReference type="SMART" id="SM01016">
    <property type="entry name" value="Arg_tRNA_synt_N"/>
    <property type="match status" value="1"/>
</dbReference>
<dbReference type="SMART" id="SM00836">
    <property type="entry name" value="DALR_1"/>
    <property type="match status" value="1"/>
</dbReference>
<dbReference type="SUPFAM" id="SSF47323">
    <property type="entry name" value="Anticodon-binding domain of a subclass of class I aminoacyl-tRNA synthetases"/>
    <property type="match status" value="1"/>
</dbReference>
<dbReference type="SUPFAM" id="SSF55190">
    <property type="entry name" value="Arginyl-tRNA synthetase (ArgRS), N-terminal 'additional' domain"/>
    <property type="match status" value="1"/>
</dbReference>
<dbReference type="SUPFAM" id="SSF52374">
    <property type="entry name" value="Nucleotidylyl transferase"/>
    <property type="match status" value="1"/>
</dbReference>
<dbReference type="PROSITE" id="PS00178">
    <property type="entry name" value="AA_TRNA_LIGASE_I"/>
    <property type="match status" value="1"/>
</dbReference>
<evidence type="ECO:0000255" key="1">
    <source>
        <dbReference type="HAMAP-Rule" id="MF_00123"/>
    </source>
</evidence>
<reference key="1">
    <citation type="journal article" date="2007" name="PLoS ONE">
        <title>Analysis of the neurotoxin complex genes in Clostridium botulinum A1-A4 and B1 strains: BoNT/A3, /Ba4 and /B1 clusters are located within plasmids.</title>
        <authorList>
            <person name="Smith T.J."/>
            <person name="Hill K.K."/>
            <person name="Foley B.T."/>
            <person name="Detter J.C."/>
            <person name="Munk A.C."/>
            <person name="Bruce D.C."/>
            <person name="Doggett N.A."/>
            <person name="Smith L.A."/>
            <person name="Marks J.D."/>
            <person name="Xie G."/>
            <person name="Brettin T.S."/>
        </authorList>
    </citation>
    <scope>NUCLEOTIDE SEQUENCE [LARGE SCALE GENOMIC DNA]</scope>
    <source>
        <strain>Okra / Type B1</strain>
    </source>
</reference>
<gene>
    <name evidence="1" type="primary">argS</name>
    <name type="ordered locus">CLD_3487</name>
</gene>
<proteinExistence type="inferred from homology"/>
<sequence length="563" mass="64013">MDYKNLVAERIKENTELEVDLIEKLIEIPPKKEMGDYAFPCFQLAKTFRKAPNLIAEELKEKINKEGFEKVVTVGPYLNFFVDKTILIKDVLEKVLSEKEKYGSSKVGEGKNVVVEYSSPNIAKPFHIGHLFTTAIGNALYKILSFEGYNCIGINHLGDWGTQFGKLISAYRRWVDEEALEKDAIGELLRIYVKFHEEAEKDPELEKEARLNFKRLEDGSEEETELWNRFKDLSLKEFNKVYDMLGIKFDSLAGESFYSDKMDAVVQEIDDKGLLVDSNGAKVVMLDEYNMPPCMIKKSDGATIYATRDLAAAIYRKKTYDFHKCIYVVGTPQALHFKQVFTTLKLMGHDWADDCKHVGFGLVKLANKKLSTRNGDVVFLEDLLNQSVEETLKIINEKNPNLKNKEDVAKKLGIGAVVFTYLKNNRERDIVFDWKEILSFDGETGPYVEYSYARGKSILRKAGELTGEADYSKLSSKEEFELAKLLGGFNDAIMNAIDKLEPAMVTRYIIEVAKAFNKFYNAHGILNAEDNDVKLARVKLVEATCQVIKNALNLLGIDVVEEM</sequence>
<protein>
    <recommendedName>
        <fullName evidence="1">Arginine--tRNA ligase</fullName>
        <ecNumber evidence="1">6.1.1.19</ecNumber>
    </recommendedName>
    <alternativeName>
        <fullName evidence="1">Arginyl-tRNA synthetase</fullName>
        <shortName evidence="1">ArgRS</shortName>
    </alternativeName>
</protein>
<feature type="chain" id="PRO_1000095352" description="Arginine--tRNA ligase">
    <location>
        <begin position="1"/>
        <end position="563"/>
    </location>
</feature>
<feature type="short sequence motif" description="'HIGH' region">
    <location>
        <begin position="120"/>
        <end position="130"/>
    </location>
</feature>